<accession>Q89WW0</accession>
<evidence type="ECO:0000255" key="1">
    <source>
        <dbReference type="HAMAP-Rule" id="MF_00394"/>
    </source>
</evidence>
<protein>
    <recommendedName>
        <fullName evidence="1">Glycerol-3-phosphate dehydrogenase [NAD(P)+]</fullName>
        <ecNumber evidence="1">1.1.1.94</ecNumber>
    </recommendedName>
    <alternativeName>
        <fullName evidence="1">NAD(P)(+)-dependent glycerol-3-phosphate dehydrogenase</fullName>
    </alternativeName>
    <alternativeName>
        <fullName evidence="1">NAD(P)H-dependent dihydroxyacetone-phosphate reductase</fullName>
    </alternativeName>
</protein>
<proteinExistence type="inferred from homology"/>
<gene>
    <name evidence="1" type="primary">gpsA</name>
    <name type="ordered locus">blr0568</name>
</gene>
<keyword id="KW-0963">Cytoplasm</keyword>
<keyword id="KW-0444">Lipid biosynthesis</keyword>
<keyword id="KW-0443">Lipid metabolism</keyword>
<keyword id="KW-0520">NAD</keyword>
<keyword id="KW-0521">NADP</keyword>
<keyword id="KW-0547">Nucleotide-binding</keyword>
<keyword id="KW-0560">Oxidoreductase</keyword>
<keyword id="KW-0594">Phospholipid biosynthesis</keyword>
<keyword id="KW-1208">Phospholipid metabolism</keyword>
<keyword id="KW-1185">Reference proteome</keyword>
<feature type="chain" id="PRO_0000137933" description="Glycerol-3-phosphate dehydrogenase [NAD(P)+]">
    <location>
        <begin position="1"/>
        <end position="326"/>
    </location>
</feature>
<feature type="active site" description="Proton acceptor" evidence="1">
    <location>
        <position position="190"/>
    </location>
</feature>
<feature type="binding site" evidence="1">
    <location>
        <position position="15"/>
    </location>
    <ligand>
        <name>NADPH</name>
        <dbReference type="ChEBI" id="CHEBI:57783"/>
    </ligand>
</feature>
<feature type="binding site" evidence="1">
    <location>
        <position position="35"/>
    </location>
    <ligand>
        <name>NADPH</name>
        <dbReference type="ChEBI" id="CHEBI:57783"/>
    </ligand>
</feature>
<feature type="binding site" evidence="1">
    <location>
        <position position="107"/>
    </location>
    <ligand>
        <name>NADPH</name>
        <dbReference type="ChEBI" id="CHEBI:57783"/>
    </ligand>
</feature>
<feature type="binding site" evidence="1">
    <location>
        <position position="107"/>
    </location>
    <ligand>
        <name>sn-glycerol 3-phosphate</name>
        <dbReference type="ChEBI" id="CHEBI:57597"/>
    </ligand>
</feature>
<feature type="binding site" evidence="1">
    <location>
        <position position="135"/>
    </location>
    <ligand>
        <name>sn-glycerol 3-phosphate</name>
        <dbReference type="ChEBI" id="CHEBI:57597"/>
    </ligand>
</feature>
<feature type="binding site" evidence="1">
    <location>
        <position position="137"/>
    </location>
    <ligand>
        <name>sn-glycerol 3-phosphate</name>
        <dbReference type="ChEBI" id="CHEBI:57597"/>
    </ligand>
</feature>
<feature type="binding site" evidence="1">
    <location>
        <position position="139"/>
    </location>
    <ligand>
        <name>NADPH</name>
        <dbReference type="ChEBI" id="CHEBI:57783"/>
    </ligand>
</feature>
<feature type="binding site" evidence="1">
    <location>
        <position position="190"/>
    </location>
    <ligand>
        <name>sn-glycerol 3-phosphate</name>
        <dbReference type="ChEBI" id="CHEBI:57597"/>
    </ligand>
</feature>
<feature type="binding site" evidence="1">
    <location>
        <position position="243"/>
    </location>
    <ligand>
        <name>sn-glycerol 3-phosphate</name>
        <dbReference type="ChEBI" id="CHEBI:57597"/>
    </ligand>
</feature>
<feature type="binding site" evidence="1">
    <location>
        <position position="253"/>
    </location>
    <ligand>
        <name>sn-glycerol 3-phosphate</name>
        <dbReference type="ChEBI" id="CHEBI:57597"/>
    </ligand>
</feature>
<feature type="binding site" evidence="1">
    <location>
        <position position="254"/>
    </location>
    <ligand>
        <name>NADPH</name>
        <dbReference type="ChEBI" id="CHEBI:57783"/>
    </ligand>
</feature>
<feature type="binding site" evidence="1">
    <location>
        <position position="254"/>
    </location>
    <ligand>
        <name>sn-glycerol 3-phosphate</name>
        <dbReference type="ChEBI" id="CHEBI:57597"/>
    </ligand>
</feature>
<feature type="binding site" evidence="1">
    <location>
        <position position="255"/>
    </location>
    <ligand>
        <name>sn-glycerol 3-phosphate</name>
        <dbReference type="ChEBI" id="CHEBI:57597"/>
    </ligand>
</feature>
<feature type="binding site" evidence="1">
    <location>
        <position position="273"/>
    </location>
    <ligand>
        <name>NADPH</name>
        <dbReference type="ChEBI" id="CHEBI:57783"/>
    </ligand>
</feature>
<feature type="binding site" evidence="1">
    <location>
        <position position="275"/>
    </location>
    <ligand>
        <name>NADPH</name>
        <dbReference type="ChEBI" id="CHEBI:57783"/>
    </ligand>
</feature>
<reference key="1">
    <citation type="journal article" date="2002" name="DNA Res.">
        <title>Complete genomic sequence of nitrogen-fixing symbiotic bacterium Bradyrhizobium japonicum USDA110.</title>
        <authorList>
            <person name="Kaneko T."/>
            <person name="Nakamura Y."/>
            <person name="Sato S."/>
            <person name="Minamisawa K."/>
            <person name="Uchiumi T."/>
            <person name="Sasamoto S."/>
            <person name="Watanabe A."/>
            <person name="Idesawa K."/>
            <person name="Iriguchi M."/>
            <person name="Kawashima K."/>
            <person name="Kohara M."/>
            <person name="Matsumoto M."/>
            <person name="Shimpo S."/>
            <person name="Tsuruoka H."/>
            <person name="Wada T."/>
            <person name="Yamada M."/>
            <person name="Tabata S."/>
        </authorList>
    </citation>
    <scope>NUCLEOTIDE SEQUENCE [LARGE SCALE GENOMIC DNA]</scope>
    <source>
        <strain>JCM 10833 / BCRC 13528 / IAM 13628 / NBRC 14792 / USDA 110</strain>
    </source>
</reference>
<sequence length="326" mass="33282">MTAFHSVAVIGAGAWGTALAMVAARAGRSVTLWARNAEHATRIASTRDNPRLPGVRLAPDIVVTSELALAARADMLLIATPAQHLRGAVNMLASHIARPTPVVACAKGIEHGTHKFMTEVIAEAALHAQPAILSGPSFADDVARGLPTAVTLAAKEEELASSLVQALGSPTFRPYHSTDVRGVEIGGAAKNVLAIAAGIVVGRNLGASALAALTTRGFSELARLGRACGARPETLSGLSGLGDLLLSCSTAQSRNFALGIALGRGEAAPAGKLAEGAFTAPVLVELAAARNVDMPVSQAVAAILDNKLTIDAAIEGLLTRPFKAEE</sequence>
<name>GPDA_BRADU</name>
<comment type="function">
    <text evidence="1">Catalyzes the reduction of the glycolytic intermediate dihydroxyacetone phosphate (DHAP) to sn-glycerol 3-phosphate (G3P), the key precursor for phospholipid synthesis.</text>
</comment>
<comment type="catalytic activity">
    <reaction evidence="1">
        <text>sn-glycerol 3-phosphate + NAD(+) = dihydroxyacetone phosphate + NADH + H(+)</text>
        <dbReference type="Rhea" id="RHEA:11092"/>
        <dbReference type="ChEBI" id="CHEBI:15378"/>
        <dbReference type="ChEBI" id="CHEBI:57540"/>
        <dbReference type="ChEBI" id="CHEBI:57597"/>
        <dbReference type="ChEBI" id="CHEBI:57642"/>
        <dbReference type="ChEBI" id="CHEBI:57945"/>
        <dbReference type="EC" id="1.1.1.94"/>
    </reaction>
    <physiologicalReaction direction="right-to-left" evidence="1">
        <dbReference type="Rhea" id="RHEA:11094"/>
    </physiologicalReaction>
</comment>
<comment type="catalytic activity">
    <reaction evidence="1">
        <text>sn-glycerol 3-phosphate + NADP(+) = dihydroxyacetone phosphate + NADPH + H(+)</text>
        <dbReference type="Rhea" id="RHEA:11096"/>
        <dbReference type="ChEBI" id="CHEBI:15378"/>
        <dbReference type="ChEBI" id="CHEBI:57597"/>
        <dbReference type="ChEBI" id="CHEBI:57642"/>
        <dbReference type="ChEBI" id="CHEBI:57783"/>
        <dbReference type="ChEBI" id="CHEBI:58349"/>
        <dbReference type="EC" id="1.1.1.94"/>
    </reaction>
    <physiologicalReaction direction="right-to-left" evidence="1">
        <dbReference type="Rhea" id="RHEA:11098"/>
    </physiologicalReaction>
</comment>
<comment type="pathway">
    <text evidence="1">Membrane lipid metabolism; glycerophospholipid metabolism.</text>
</comment>
<comment type="subcellular location">
    <subcellularLocation>
        <location evidence="1">Cytoplasm</location>
    </subcellularLocation>
</comment>
<comment type="similarity">
    <text evidence="1">Belongs to the NAD-dependent glycerol-3-phosphate dehydrogenase family.</text>
</comment>
<dbReference type="EC" id="1.1.1.94" evidence="1"/>
<dbReference type="EMBL" id="BA000040">
    <property type="protein sequence ID" value="BAC45833.1"/>
    <property type="molecule type" value="Genomic_DNA"/>
</dbReference>
<dbReference type="RefSeq" id="NP_767208.1">
    <property type="nucleotide sequence ID" value="NC_004463.1"/>
</dbReference>
<dbReference type="RefSeq" id="WP_011083397.1">
    <property type="nucleotide sequence ID" value="NC_004463.1"/>
</dbReference>
<dbReference type="SMR" id="Q89WW0"/>
<dbReference type="FunCoup" id="Q89WW0">
    <property type="interactions" value="604"/>
</dbReference>
<dbReference type="STRING" id="224911.AAV28_42120"/>
<dbReference type="EnsemblBacteria" id="BAC45833">
    <property type="protein sequence ID" value="BAC45833"/>
    <property type="gene ID" value="BAC45833"/>
</dbReference>
<dbReference type="GeneID" id="46495714"/>
<dbReference type="KEGG" id="bja:blr0568"/>
<dbReference type="PATRIC" id="fig|224911.44.peg.9110"/>
<dbReference type="eggNOG" id="COG0240">
    <property type="taxonomic scope" value="Bacteria"/>
</dbReference>
<dbReference type="HOGENOM" id="CLU_033449_0_2_5"/>
<dbReference type="InParanoid" id="Q89WW0"/>
<dbReference type="OrthoDB" id="9812273at2"/>
<dbReference type="PhylomeDB" id="Q89WW0"/>
<dbReference type="UniPathway" id="UPA00940"/>
<dbReference type="Proteomes" id="UP000002526">
    <property type="component" value="Chromosome"/>
</dbReference>
<dbReference type="GO" id="GO:0005829">
    <property type="term" value="C:cytosol"/>
    <property type="evidence" value="ECO:0000318"/>
    <property type="project" value="GO_Central"/>
</dbReference>
<dbReference type="GO" id="GO:0047952">
    <property type="term" value="F:glycerol-3-phosphate dehydrogenase [NAD(P)+] activity"/>
    <property type="evidence" value="ECO:0000318"/>
    <property type="project" value="GO_Central"/>
</dbReference>
<dbReference type="GO" id="GO:0051287">
    <property type="term" value="F:NAD binding"/>
    <property type="evidence" value="ECO:0007669"/>
    <property type="project" value="InterPro"/>
</dbReference>
<dbReference type="GO" id="GO:0005975">
    <property type="term" value="P:carbohydrate metabolic process"/>
    <property type="evidence" value="ECO:0007669"/>
    <property type="project" value="InterPro"/>
</dbReference>
<dbReference type="GO" id="GO:0046167">
    <property type="term" value="P:glycerol-3-phosphate biosynthetic process"/>
    <property type="evidence" value="ECO:0007669"/>
    <property type="project" value="UniProtKB-UniRule"/>
</dbReference>
<dbReference type="GO" id="GO:0046168">
    <property type="term" value="P:glycerol-3-phosphate catabolic process"/>
    <property type="evidence" value="ECO:0007669"/>
    <property type="project" value="InterPro"/>
</dbReference>
<dbReference type="GO" id="GO:0006072">
    <property type="term" value="P:glycerol-3-phosphate metabolic process"/>
    <property type="evidence" value="ECO:0000318"/>
    <property type="project" value="GO_Central"/>
</dbReference>
<dbReference type="GO" id="GO:0006650">
    <property type="term" value="P:glycerophospholipid metabolic process"/>
    <property type="evidence" value="ECO:0007669"/>
    <property type="project" value="UniProtKB-UniRule"/>
</dbReference>
<dbReference type="GO" id="GO:0008654">
    <property type="term" value="P:phospholipid biosynthetic process"/>
    <property type="evidence" value="ECO:0007669"/>
    <property type="project" value="UniProtKB-KW"/>
</dbReference>
<dbReference type="FunFam" id="1.10.1040.10:FF:000058">
    <property type="entry name" value="Glycerol-3-phosphate dehydrogenase [NAD(P)+]"/>
    <property type="match status" value="1"/>
</dbReference>
<dbReference type="FunFam" id="3.40.50.720:FF:000019">
    <property type="entry name" value="Glycerol-3-phosphate dehydrogenase [NAD(P)+]"/>
    <property type="match status" value="1"/>
</dbReference>
<dbReference type="Gene3D" id="1.10.1040.10">
    <property type="entry name" value="N-(1-d-carboxylethyl)-l-norvaline Dehydrogenase, domain 2"/>
    <property type="match status" value="1"/>
</dbReference>
<dbReference type="Gene3D" id="3.40.50.720">
    <property type="entry name" value="NAD(P)-binding Rossmann-like Domain"/>
    <property type="match status" value="1"/>
</dbReference>
<dbReference type="HAMAP" id="MF_00394">
    <property type="entry name" value="NAD_Glyc3P_dehydrog"/>
    <property type="match status" value="1"/>
</dbReference>
<dbReference type="InterPro" id="IPR008927">
    <property type="entry name" value="6-PGluconate_DH-like_C_sf"/>
</dbReference>
<dbReference type="InterPro" id="IPR013328">
    <property type="entry name" value="6PGD_dom2"/>
</dbReference>
<dbReference type="InterPro" id="IPR006168">
    <property type="entry name" value="G3P_DH_NAD-dep"/>
</dbReference>
<dbReference type="InterPro" id="IPR006109">
    <property type="entry name" value="G3P_DH_NAD-dep_C"/>
</dbReference>
<dbReference type="InterPro" id="IPR011128">
    <property type="entry name" value="G3P_DH_NAD-dep_N"/>
</dbReference>
<dbReference type="InterPro" id="IPR036291">
    <property type="entry name" value="NAD(P)-bd_dom_sf"/>
</dbReference>
<dbReference type="NCBIfam" id="NF000940">
    <property type="entry name" value="PRK00094.1-2"/>
    <property type="match status" value="1"/>
</dbReference>
<dbReference type="NCBIfam" id="NF000942">
    <property type="entry name" value="PRK00094.1-4"/>
    <property type="match status" value="1"/>
</dbReference>
<dbReference type="PANTHER" id="PTHR11728">
    <property type="entry name" value="GLYCEROL-3-PHOSPHATE DEHYDROGENASE"/>
    <property type="match status" value="1"/>
</dbReference>
<dbReference type="PANTHER" id="PTHR11728:SF1">
    <property type="entry name" value="GLYCEROL-3-PHOSPHATE DEHYDROGENASE [NAD(+)] 2, CHLOROPLASTIC"/>
    <property type="match status" value="1"/>
</dbReference>
<dbReference type="Pfam" id="PF07479">
    <property type="entry name" value="NAD_Gly3P_dh_C"/>
    <property type="match status" value="1"/>
</dbReference>
<dbReference type="Pfam" id="PF01210">
    <property type="entry name" value="NAD_Gly3P_dh_N"/>
    <property type="match status" value="1"/>
</dbReference>
<dbReference type="PIRSF" id="PIRSF000114">
    <property type="entry name" value="Glycerol-3-P_dh"/>
    <property type="match status" value="1"/>
</dbReference>
<dbReference type="PRINTS" id="PR00077">
    <property type="entry name" value="GPDHDRGNASE"/>
</dbReference>
<dbReference type="SUPFAM" id="SSF48179">
    <property type="entry name" value="6-phosphogluconate dehydrogenase C-terminal domain-like"/>
    <property type="match status" value="1"/>
</dbReference>
<dbReference type="SUPFAM" id="SSF51735">
    <property type="entry name" value="NAD(P)-binding Rossmann-fold domains"/>
    <property type="match status" value="1"/>
</dbReference>
<dbReference type="PROSITE" id="PS00957">
    <property type="entry name" value="NAD_G3PDH"/>
    <property type="match status" value="1"/>
</dbReference>
<organism>
    <name type="scientific">Bradyrhizobium diazoefficiens (strain JCM 10833 / BCRC 13528 / IAM 13628 / NBRC 14792 / USDA 110)</name>
    <dbReference type="NCBI Taxonomy" id="224911"/>
    <lineage>
        <taxon>Bacteria</taxon>
        <taxon>Pseudomonadati</taxon>
        <taxon>Pseudomonadota</taxon>
        <taxon>Alphaproteobacteria</taxon>
        <taxon>Hyphomicrobiales</taxon>
        <taxon>Nitrobacteraceae</taxon>
        <taxon>Bradyrhizobium</taxon>
    </lineage>
</organism>